<feature type="chain" id="PRO_0000390061" description="NADH-quinone oxidoreductase subunit K">
    <location>
        <begin position="1"/>
        <end position="106"/>
    </location>
</feature>
<feature type="transmembrane region" description="Helical" evidence="1">
    <location>
        <begin position="8"/>
        <end position="28"/>
    </location>
</feature>
<feature type="transmembrane region" description="Helical" evidence="1">
    <location>
        <begin position="35"/>
        <end position="55"/>
    </location>
</feature>
<feature type="transmembrane region" description="Helical" evidence="1">
    <location>
        <begin position="66"/>
        <end position="86"/>
    </location>
</feature>
<comment type="function">
    <text evidence="1">NDH-1 shuttles electrons from NADH, via FMN and iron-sulfur (Fe-S) centers, to quinones in the respiratory chain. The immediate electron acceptor for the enzyme in this species is believed to be a menaquinone. Couples the redox reaction to proton translocation (for every two electrons transferred, four hydrogen ions are translocated across the cytoplasmic membrane), and thus conserves the redox energy in a proton gradient.</text>
</comment>
<comment type="catalytic activity">
    <reaction evidence="1">
        <text>a quinone + NADH + 5 H(+)(in) = a quinol + NAD(+) + 4 H(+)(out)</text>
        <dbReference type="Rhea" id="RHEA:57888"/>
        <dbReference type="ChEBI" id="CHEBI:15378"/>
        <dbReference type="ChEBI" id="CHEBI:24646"/>
        <dbReference type="ChEBI" id="CHEBI:57540"/>
        <dbReference type="ChEBI" id="CHEBI:57945"/>
        <dbReference type="ChEBI" id="CHEBI:132124"/>
    </reaction>
</comment>
<comment type="subunit">
    <text evidence="1">NDH-1 is composed of 14 different subunits. Subunits NuoA, H, J, K, L, M, N constitute the membrane sector of the complex.</text>
</comment>
<comment type="subcellular location">
    <subcellularLocation>
        <location evidence="1">Cell inner membrane</location>
        <topology evidence="1">Multi-pass membrane protein</topology>
    </subcellularLocation>
</comment>
<comment type="similarity">
    <text evidence="1">Belongs to the complex I subunit 4L family.</text>
</comment>
<protein>
    <recommendedName>
        <fullName evidence="1">NADH-quinone oxidoreductase subunit K</fullName>
        <ecNumber evidence="1">7.1.1.-</ecNumber>
    </recommendedName>
    <alternativeName>
        <fullName evidence="1">NADH dehydrogenase I subunit K</fullName>
    </alternativeName>
    <alternativeName>
        <fullName evidence="1">NDH-1 subunit K</fullName>
    </alternativeName>
</protein>
<accession>A5FKJ7</accession>
<name>NUOK_FLAJ1</name>
<dbReference type="EC" id="7.1.1.-" evidence="1"/>
<dbReference type="EMBL" id="CP000685">
    <property type="protein sequence ID" value="ABQ04268.1"/>
    <property type="molecule type" value="Genomic_DNA"/>
</dbReference>
<dbReference type="RefSeq" id="WP_012023318.1">
    <property type="nucleotide sequence ID" value="NZ_MUGZ01000003.1"/>
</dbReference>
<dbReference type="SMR" id="A5FKJ7"/>
<dbReference type="STRING" id="376686.Fjoh_1236"/>
<dbReference type="KEGG" id="fjo:Fjoh_1236"/>
<dbReference type="eggNOG" id="COG0713">
    <property type="taxonomic scope" value="Bacteria"/>
</dbReference>
<dbReference type="HOGENOM" id="CLU_144724_0_0_10"/>
<dbReference type="OrthoDB" id="9810120at2"/>
<dbReference type="Proteomes" id="UP000006694">
    <property type="component" value="Chromosome"/>
</dbReference>
<dbReference type="GO" id="GO:0030964">
    <property type="term" value="C:NADH dehydrogenase complex"/>
    <property type="evidence" value="ECO:0007669"/>
    <property type="project" value="TreeGrafter"/>
</dbReference>
<dbReference type="GO" id="GO:0005886">
    <property type="term" value="C:plasma membrane"/>
    <property type="evidence" value="ECO:0007669"/>
    <property type="project" value="UniProtKB-SubCell"/>
</dbReference>
<dbReference type="GO" id="GO:0050136">
    <property type="term" value="F:NADH:ubiquinone reductase (non-electrogenic) activity"/>
    <property type="evidence" value="ECO:0007669"/>
    <property type="project" value="UniProtKB-UniRule"/>
</dbReference>
<dbReference type="GO" id="GO:0048038">
    <property type="term" value="F:quinone binding"/>
    <property type="evidence" value="ECO:0007669"/>
    <property type="project" value="UniProtKB-KW"/>
</dbReference>
<dbReference type="GO" id="GO:0042773">
    <property type="term" value="P:ATP synthesis coupled electron transport"/>
    <property type="evidence" value="ECO:0007669"/>
    <property type="project" value="InterPro"/>
</dbReference>
<dbReference type="FunFam" id="1.10.287.3510:FF:000001">
    <property type="entry name" value="NADH-quinone oxidoreductase subunit K"/>
    <property type="match status" value="1"/>
</dbReference>
<dbReference type="Gene3D" id="1.10.287.3510">
    <property type="match status" value="1"/>
</dbReference>
<dbReference type="HAMAP" id="MF_01456">
    <property type="entry name" value="NDH1_NuoK"/>
    <property type="match status" value="1"/>
</dbReference>
<dbReference type="InterPro" id="IPR001133">
    <property type="entry name" value="NADH_UbQ_OxRdtase_chain4L/K"/>
</dbReference>
<dbReference type="InterPro" id="IPR039428">
    <property type="entry name" value="NUOK/Mnh_C1-like"/>
</dbReference>
<dbReference type="NCBIfam" id="NF004320">
    <property type="entry name" value="PRK05715.1-2"/>
    <property type="match status" value="1"/>
</dbReference>
<dbReference type="NCBIfam" id="NF004321">
    <property type="entry name" value="PRK05715.1-3"/>
    <property type="match status" value="1"/>
</dbReference>
<dbReference type="NCBIfam" id="NF004323">
    <property type="entry name" value="PRK05715.1-5"/>
    <property type="match status" value="1"/>
</dbReference>
<dbReference type="PANTHER" id="PTHR11434:SF16">
    <property type="entry name" value="NADH-UBIQUINONE OXIDOREDUCTASE CHAIN 4L"/>
    <property type="match status" value="1"/>
</dbReference>
<dbReference type="PANTHER" id="PTHR11434">
    <property type="entry name" value="NADH-UBIQUINONE OXIDOREDUCTASE SUBUNIT ND4L"/>
    <property type="match status" value="1"/>
</dbReference>
<dbReference type="Pfam" id="PF00420">
    <property type="entry name" value="Oxidored_q2"/>
    <property type="match status" value="1"/>
</dbReference>
<sequence>MGNILNQIGIENYIFLSVVLFCIGVFGVLYRRNSIIVFMSIEIMLNAVNLLFVAFSTYHQDAQGQVFVFFSMAVAAAEVAVGLAILVSIFRNIGSISIDNLKNLKG</sequence>
<organism>
    <name type="scientific">Flavobacterium johnsoniae (strain ATCC 17061 / DSM 2064 / JCM 8514 / BCRC 14874 / CCUG 350202 / NBRC 14942 / NCIMB 11054 / UW101)</name>
    <name type="common">Cytophaga johnsonae</name>
    <dbReference type="NCBI Taxonomy" id="376686"/>
    <lineage>
        <taxon>Bacteria</taxon>
        <taxon>Pseudomonadati</taxon>
        <taxon>Bacteroidota</taxon>
        <taxon>Flavobacteriia</taxon>
        <taxon>Flavobacteriales</taxon>
        <taxon>Flavobacteriaceae</taxon>
        <taxon>Flavobacterium</taxon>
    </lineage>
</organism>
<proteinExistence type="inferred from homology"/>
<evidence type="ECO:0000255" key="1">
    <source>
        <dbReference type="HAMAP-Rule" id="MF_01456"/>
    </source>
</evidence>
<gene>
    <name evidence="1" type="primary">nuoK</name>
    <name type="ordered locus">Fjoh_1236</name>
</gene>
<reference key="1">
    <citation type="journal article" date="2009" name="Appl. Environ. Microbiol.">
        <title>Novel features of the polysaccharide-digesting gliding bacterium Flavobacterium johnsoniae as revealed by genome sequence analysis.</title>
        <authorList>
            <person name="McBride M.J."/>
            <person name="Xie G."/>
            <person name="Martens E.C."/>
            <person name="Lapidus A."/>
            <person name="Henrissat B."/>
            <person name="Rhodes R.G."/>
            <person name="Goltsman E."/>
            <person name="Wang W."/>
            <person name="Xu J."/>
            <person name="Hunnicutt D.W."/>
            <person name="Staroscik A.M."/>
            <person name="Hoover T.R."/>
            <person name="Cheng Y.Q."/>
            <person name="Stein J.L."/>
        </authorList>
    </citation>
    <scope>NUCLEOTIDE SEQUENCE [LARGE SCALE GENOMIC DNA]</scope>
    <source>
        <strain>ATCC 17061 / DSM 2064 / JCM 8514 / BCRC 14874 / CCUG 350202 / NBRC 14942 / NCIMB 11054 / UW101</strain>
    </source>
</reference>
<keyword id="KW-0997">Cell inner membrane</keyword>
<keyword id="KW-1003">Cell membrane</keyword>
<keyword id="KW-0472">Membrane</keyword>
<keyword id="KW-0520">NAD</keyword>
<keyword id="KW-0874">Quinone</keyword>
<keyword id="KW-1278">Translocase</keyword>
<keyword id="KW-0812">Transmembrane</keyword>
<keyword id="KW-1133">Transmembrane helix</keyword>
<keyword id="KW-0813">Transport</keyword>